<reference key="1">
    <citation type="submission" date="1997-11" db="EMBL/GenBank/DDBJ databases">
        <title>Nucleotide sequence of the 300-304 chromosomal segment of Bacillus subtilis.</title>
        <authorList>
            <person name="Lazarevic V."/>
            <person name="Soldo B."/>
            <person name="Rivolta C."/>
            <person name="Reynolds S."/>
            <person name="Mauel C."/>
            <person name="Karamata D."/>
        </authorList>
    </citation>
    <scope>NUCLEOTIDE SEQUENCE [GENOMIC DNA]</scope>
</reference>
<reference key="2">
    <citation type="journal article" date="1997" name="Nature">
        <title>The complete genome sequence of the Gram-positive bacterium Bacillus subtilis.</title>
        <authorList>
            <person name="Kunst F."/>
            <person name="Ogasawara N."/>
            <person name="Moszer I."/>
            <person name="Albertini A.M."/>
            <person name="Alloni G."/>
            <person name="Azevedo V."/>
            <person name="Bertero M.G."/>
            <person name="Bessieres P."/>
            <person name="Bolotin A."/>
            <person name="Borchert S."/>
            <person name="Borriss R."/>
            <person name="Boursier L."/>
            <person name="Brans A."/>
            <person name="Braun M."/>
            <person name="Brignell S.C."/>
            <person name="Bron S."/>
            <person name="Brouillet S."/>
            <person name="Bruschi C.V."/>
            <person name="Caldwell B."/>
            <person name="Capuano V."/>
            <person name="Carter N.M."/>
            <person name="Choi S.-K."/>
            <person name="Codani J.-J."/>
            <person name="Connerton I.F."/>
            <person name="Cummings N.J."/>
            <person name="Daniel R.A."/>
            <person name="Denizot F."/>
            <person name="Devine K.M."/>
            <person name="Duesterhoeft A."/>
            <person name="Ehrlich S.D."/>
            <person name="Emmerson P.T."/>
            <person name="Entian K.-D."/>
            <person name="Errington J."/>
            <person name="Fabret C."/>
            <person name="Ferrari E."/>
            <person name="Foulger D."/>
            <person name="Fritz C."/>
            <person name="Fujita M."/>
            <person name="Fujita Y."/>
            <person name="Fuma S."/>
            <person name="Galizzi A."/>
            <person name="Galleron N."/>
            <person name="Ghim S.-Y."/>
            <person name="Glaser P."/>
            <person name="Goffeau A."/>
            <person name="Golightly E.J."/>
            <person name="Grandi G."/>
            <person name="Guiseppi G."/>
            <person name="Guy B.J."/>
            <person name="Haga K."/>
            <person name="Haiech J."/>
            <person name="Harwood C.R."/>
            <person name="Henaut A."/>
            <person name="Hilbert H."/>
            <person name="Holsappel S."/>
            <person name="Hosono S."/>
            <person name="Hullo M.-F."/>
            <person name="Itaya M."/>
            <person name="Jones L.-M."/>
            <person name="Joris B."/>
            <person name="Karamata D."/>
            <person name="Kasahara Y."/>
            <person name="Klaerr-Blanchard M."/>
            <person name="Klein C."/>
            <person name="Kobayashi Y."/>
            <person name="Koetter P."/>
            <person name="Koningstein G."/>
            <person name="Krogh S."/>
            <person name="Kumano M."/>
            <person name="Kurita K."/>
            <person name="Lapidus A."/>
            <person name="Lardinois S."/>
            <person name="Lauber J."/>
            <person name="Lazarevic V."/>
            <person name="Lee S.-M."/>
            <person name="Levine A."/>
            <person name="Liu H."/>
            <person name="Masuda S."/>
            <person name="Mauel C."/>
            <person name="Medigue C."/>
            <person name="Medina N."/>
            <person name="Mellado R.P."/>
            <person name="Mizuno M."/>
            <person name="Moestl D."/>
            <person name="Nakai S."/>
            <person name="Noback M."/>
            <person name="Noone D."/>
            <person name="O'Reilly M."/>
            <person name="Ogawa K."/>
            <person name="Ogiwara A."/>
            <person name="Oudega B."/>
            <person name="Park S.-H."/>
            <person name="Parro V."/>
            <person name="Pohl T.M."/>
            <person name="Portetelle D."/>
            <person name="Porwollik S."/>
            <person name="Prescott A.M."/>
            <person name="Presecan E."/>
            <person name="Pujic P."/>
            <person name="Purnelle B."/>
            <person name="Rapoport G."/>
            <person name="Rey M."/>
            <person name="Reynolds S."/>
            <person name="Rieger M."/>
            <person name="Rivolta C."/>
            <person name="Rocha E."/>
            <person name="Roche B."/>
            <person name="Rose M."/>
            <person name="Sadaie Y."/>
            <person name="Sato T."/>
            <person name="Scanlan E."/>
            <person name="Schleich S."/>
            <person name="Schroeter R."/>
            <person name="Scoffone F."/>
            <person name="Sekiguchi J."/>
            <person name="Sekowska A."/>
            <person name="Seror S.J."/>
            <person name="Serror P."/>
            <person name="Shin B.-S."/>
            <person name="Soldo B."/>
            <person name="Sorokin A."/>
            <person name="Tacconi E."/>
            <person name="Takagi T."/>
            <person name="Takahashi H."/>
            <person name="Takemaru K."/>
            <person name="Takeuchi M."/>
            <person name="Tamakoshi A."/>
            <person name="Tanaka T."/>
            <person name="Terpstra P."/>
            <person name="Tognoni A."/>
            <person name="Tosato V."/>
            <person name="Uchiyama S."/>
            <person name="Vandenbol M."/>
            <person name="Vannier F."/>
            <person name="Vassarotti A."/>
            <person name="Viari A."/>
            <person name="Wambutt R."/>
            <person name="Wedler E."/>
            <person name="Wedler H."/>
            <person name="Weitzenegger T."/>
            <person name="Winters P."/>
            <person name="Wipat A."/>
            <person name="Yamamoto H."/>
            <person name="Yamane K."/>
            <person name="Yasumoto K."/>
            <person name="Yata K."/>
            <person name="Yoshida K."/>
            <person name="Yoshikawa H.-F."/>
            <person name="Zumstein E."/>
            <person name="Yoshikawa H."/>
            <person name="Danchin A."/>
        </authorList>
    </citation>
    <scope>NUCLEOTIDE SEQUENCE [LARGE SCALE GENOMIC DNA]</scope>
    <source>
        <strain>168</strain>
    </source>
</reference>
<reference key="3">
    <citation type="submission" date="1997-04" db="EMBL/GenBank/DDBJ databases">
        <authorList>
            <person name="Denizot F."/>
        </authorList>
    </citation>
    <scope>NUCLEOTIDE SEQUENCE [GENOMIC DNA] OF 178-241</scope>
    <source>
        <strain>168</strain>
    </source>
</reference>
<reference key="4">
    <citation type="journal article" date="2007" name="Mol. Microbiol.">
        <title>DegU co-ordinates multicellular behaviour exhibited by Bacillus subtilis.</title>
        <authorList>
            <person name="Verhamme D.T."/>
            <person name="Kiley T.B."/>
            <person name="Stanley-Wall N.R."/>
        </authorList>
    </citation>
    <scope>FUNCTION</scope>
    <scope>INDUCTION BY DEGU</scope>
    <scope>DISRUPTION PHENOTYPE</scope>
</reference>
<reference key="5">
    <citation type="journal article" date="2009" name="J. Bacteriol.">
        <title>DegU and Spo0A jointly control transcription of two loci required for complex colony development by Bacillus subtilis.</title>
        <authorList>
            <person name="Verhamme D.T."/>
            <person name="Murray E.J."/>
            <person name="Stanley-Wall N.R."/>
        </authorList>
    </citation>
    <scope>TRANSCRIPTION REGULATION</scope>
</reference>
<proteinExistence type="evidence at transcript level"/>
<organism>
    <name type="scientific">Bacillus subtilis (strain 168)</name>
    <dbReference type="NCBI Taxonomy" id="224308"/>
    <lineage>
        <taxon>Bacteria</taxon>
        <taxon>Bacillati</taxon>
        <taxon>Bacillota</taxon>
        <taxon>Bacilli</taxon>
        <taxon>Bacillales</taxon>
        <taxon>Bacillaceae</taxon>
        <taxon>Bacillus</taxon>
    </lineage>
</organism>
<sequence length="241" mass="27871">MKKIIFICFSLLLALTGGCSMNDNDKNSTNDNKTEAVKPKDMDPKDLPQVPAFQDEKTREYMVSTKEEEPGYYLLESKLKGFRMLFPEDGKYLSRRSSLTGKNKESIGFNSYDKDTNVMFDGHVTYYKEESFANEPKTMLDIVSGKNDYKGEYKKSSKKKTDIYTAKKKDIFDDIDRKYNYSYSYFGYVKSTEEDNLGVEYAFTLGCKNENQPCSLDEEKAKNKVEKLINSITFLIDKKEK</sequence>
<feature type="signal peptide" evidence="1">
    <location>
        <begin position="1"/>
        <end position="18"/>
    </location>
</feature>
<feature type="chain" id="PRO_0000360752" description="Putative lipoprotein YvcA">
    <location>
        <begin position="19"/>
        <end position="241"/>
    </location>
</feature>
<feature type="region of interest" description="Disordered" evidence="2">
    <location>
        <begin position="22"/>
        <end position="48"/>
    </location>
</feature>
<feature type="compositionally biased region" description="Basic and acidic residues" evidence="2">
    <location>
        <begin position="23"/>
        <end position="46"/>
    </location>
</feature>
<feature type="lipid moiety-binding region" description="N-palmitoyl cysteine" evidence="1">
    <location>
        <position position="19"/>
    </location>
</feature>
<feature type="lipid moiety-binding region" description="S-diacylglycerol cysteine" evidence="1">
    <location>
        <position position="19"/>
    </location>
</feature>
<name>YVCA_BACSU</name>
<accession>O06965</accession>
<accession>Q795F4</accession>
<accession>Q798I4</accession>
<keyword id="KW-1003">Cell membrane</keyword>
<keyword id="KW-0449">Lipoprotein</keyword>
<keyword id="KW-0472">Membrane</keyword>
<keyword id="KW-0564">Palmitate</keyword>
<keyword id="KW-1185">Reference proteome</keyword>
<keyword id="KW-0732">Signal</keyword>
<gene>
    <name type="primary">yvcA</name>
    <name type="synonym">yvrA</name>
    <name type="ordered locus">BSU34850</name>
</gene>
<dbReference type="EMBL" id="AF017113">
    <property type="protein sequence ID" value="AAC67301.1"/>
    <property type="molecule type" value="Genomic_DNA"/>
</dbReference>
<dbReference type="EMBL" id="AL009126">
    <property type="protein sequence ID" value="CAB15490.1"/>
    <property type="molecule type" value="Genomic_DNA"/>
</dbReference>
<dbReference type="EMBL" id="Z94043">
    <property type="protein sequence ID" value="CAB08070.1"/>
    <property type="molecule type" value="Genomic_DNA"/>
</dbReference>
<dbReference type="PIR" id="B70031">
    <property type="entry name" value="B70031"/>
</dbReference>
<dbReference type="RefSeq" id="NP_391365.1">
    <property type="nucleotide sequence ID" value="NC_000964.3"/>
</dbReference>
<dbReference type="RefSeq" id="WP_003244157.1">
    <property type="nucleotide sequence ID" value="NZ_OZ025638.1"/>
</dbReference>
<dbReference type="FunCoup" id="O06965">
    <property type="interactions" value="25"/>
</dbReference>
<dbReference type="STRING" id="224308.BSU34850"/>
<dbReference type="PaxDb" id="224308-BSU34850"/>
<dbReference type="EnsemblBacteria" id="CAB15490">
    <property type="protein sequence ID" value="CAB15490"/>
    <property type="gene ID" value="BSU_34850"/>
</dbReference>
<dbReference type="GeneID" id="936576"/>
<dbReference type="KEGG" id="bsu:BSU34850"/>
<dbReference type="PATRIC" id="fig|224308.179.peg.3773"/>
<dbReference type="eggNOG" id="ENOG50331MZ">
    <property type="taxonomic scope" value="Bacteria"/>
</dbReference>
<dbReference type="InParanoid" id="O06965"/>
<dbReference type="OrthoDB" id="2453115at2"/>
<dbReference type="PhylomeDB" id="O06965"/>
<dbReference type="BioCyc" id="BSUB:BSU34850-MONOMER"/>
<dbReference type="Proteomes" id="UP000001570">
    <property type="component" value="Chromosome"/>
</dbReference>
<dbReference type="GO" id="GO:0005886">
    <property type="term" value="C:plasma membrane"/>
    <property type="evidence" value="ECO:0007669"/>
    <property type="project" value="UniProtKB-SubCell"/>
</dbReference>
<dbReference type="PROSITE" id="PS51257">
    <property type="entry name" value="PROKAR_LIPOPROTEIN"/>
    <property type="match status" value="1"/>
</dbReference>
<comment type="function">
    <text evidence="3">Required for complex colony architecture.</text>
</comment>
<comment type="subcellular location">
    <subcellularLocation>
        <location evidence="1">Cell membrane</location>
        <topology evidence="1">Lipid-anchor</topology>
    </subcellularLocation>
</comment>
<comment type="induction">
    <text evidence="3">Up-regulated by DegU and Spo0A. Repressed by AbrB.</text>
</comment>
<comment type="disruption phenotype">
    <text evidence="3">Overall loss in complex colony architecture and lack of fruiting body-like structures.</text>
</comment>
<evidence type="ECO:0000255" key="1">
    <source>
        <dbReference type="PROSITE-ProRule" id="PRU00303"/>
    </source>
</evidence>
<evidence type="ECO:0000256" key="2">
    <source>
        <dbReference type="SAM" id="MobiDB-lite"/>
    </source>
</evidence>
<evidence type="ECO:0000269" key="3">
    <source>
    </source>
</evidence>
<protein>
    <recommendedName>
        <fullName>Putative lipoprotein YvcA</fullName>
    </recommendedName>
</protein>